<sequence>MSEEPRFDTVAKAAATPDLPQPYTELGMKDEEYARVREILGRRPTSAELAIYSVMWSEHCSYKSSKVHLRQFGEKAPDTDVLLVGIGENAGVVDVGDGYAVTFKIESHNHPSYVEPHQGAATGVGGIVRDILSMGARPVAVMDSLRFGPADAPDTQRVLPGVVSGISSYGNCLGLPNIGGEVGFDAGYASNPLVNALCVGVLKHENIKLAQASGPGNHVVLFGAATGPDGIGGASVLASASFDEESQAKRPSVQVGDPFLEKLLIECCMELYAKDLVVGIQDLGAAGVSCATTELAAGGTGGMRIELDRVPLRDPRLTPEEILMSESQERMMAIVEPDKLDEFLAVCAKWDILASVIGEVTDVTPEEEARGGRLVMTWRGETIVDLPPRTAADQGPVYHRPIERPADQDALLADDPAALPRPSSDEELRDQVLRVLAAPGICDSSWITDQYDRYVMGNTVLAMPHDSGMIRIAEDTDRGVALATDGNGRYTRLDPYVGTQLAYAEAYRNVAATGARPLAVTNCLNFGSPEDPGVMWQFAEATRGLADACQALGTPVTGGNVSFYNQTGSTAINPTPVIGVLGVIDDVHKRVTSAFSAEGESVVFLLGETRLELGGSAWADVIHGHLGGRPPQIDLDAEAALGRVLIDGAAAELLVSAHDLSDGGLAVALAESCLRGGVGCEVDLGDDAFTALFSESAARAVVSVRPEHETALVDLCAKHGVPVRRLGTVGGSALTMVHRTGRISIEVAELRDAYESTLPALFGNK</sequence>
<feature type="chain" id="PRO_0000236673" description="Phosphoribosylformylglycinamidine synthase subunit PurL">
    <location>
        <begin position="1"/>
        <end position="765"/>
    </location>
</feature>
<feature type="active site" evidence="1">
    <location>
        <position position="59"/>
    </location>
</feature>
<feature type="active site" description="Proton acceptor" evidence="1">
    <location>
        <position position="108"/>
    </location>
</feature>
<feature type="binding site" evidence="1">
    <location>
        <position position="62"/>
    </location>
    <ligand>
        <name>ATP</name>
        <dbReference type="ChEBI" id="CHEBI:30616"/>
    </ligand>
</feature>
<feature type="binding site" evidence="1">
    <location>
        <position position="104"/>
    </location>
    <ligand>
        <name>ATP</name>
        <dbReference type="ChEBI" id="CHEBI:30616"/>
    </ligand>
</feature>
<feature type="binding site" evidence="1">
    <location>
        <position position="106"/>
    </location>
    <ligand>
        <name>Mg(2+)</name>
        <dbReference type="ChEBI" id="CHEBI:18420"/>
        <label>1</label>
    </ligand>
</feature>
<feature type="binding site" evidence="1">
    <location>
        <begin position="107"/>
        <end position="110"/>
    </location>
    <ligand>
        <name>substrate</name>
    </ligand>
</feature>
<feature type="binding site" evidence="1">
    <location>
        <position position="129"/>
    </location>
    <ligand>
        <name>substrate</name>
    </ligand>
</feature>
<feature type="binding site" evidence="1">
    <location>
        <position position="130"/>
    </location>
    <ligand>
        <name>Mg(2+)</name>
        <dbReference type="ChEBI" id="CHEBI:18420"/>
        <label>2</label>
    </ligand>
</feature>
<feature type="binding site" evidence="1">
    <location>
        <position position="254"/>
    </location>
    <ligand>
        <name>substrate</name>
    </ligand>
</feature>
<feature type="binding site" evidence="1">
    <location>
        <position position="282"/>
    </location>
    <ligand>
        <name>Mg(2+)</name>
        <dbReference type="ChEBI" id="CHEBI:18420"/>
        <label>2</label>
    </ligand>
</feature>
<feature type="binding site" evidence="1">
    <location>
        <begin position="326"/>
        <end position="328"/>
    </location>
    <ligand>
        <name>substrate</name>
    </ligand>
</feature>
<feature type="binding site" evidence="1">
    <location>
        <position position="522"/>
    </location>
    <ligand>
        <name>ATP</name>
        <dbReference type="ChEBI" id="CHEBI:30616"/>
    </ligand>
</feature>
<feature type="binding site" evidence="1">
    <location>
        <position position="559"/>
    </location>
    <ligand>
        <name>ATP</name>
        <dbReference type="ChEBI" id="CHEBI:30616"/>
    </ligand>
</feature>
<feature type="binding site" evidence="1">
    <location>
        <position position="560"/>
    </location>
    <ligand>
        <name>Mg(2+)</name>
        <dbReference type="ChEBI" id="CHEBI:18420"/>
        <label>1</label>
    </ligand>
</feature>
<feature type="binding site" evidence="1">
    <location>
        <position position="562"/>
    </location>
    <ligand>
        <name>substrate</name>
    </ligand>
</feature>
<evidence type="ECO:0000255" key="1">
    <source>
        <dbReference type="HAMAP-Rule" id="MF_00420"/>
    </source>
</evidence>
<accession>Q47TL8</accession>
<organism>
    <name type="scientific">Thermobifida fusca (strain YX)</name>
    <dbReference type="NCBI Taxonomy" id="269800"/>
    <lineage>
        <taxon>Bacteria</taxon>
        <taxon>Bacillati</taxon>
        <taxon>Actinomycetota</taxon>
        <taxon>Actinomycetes</taxon>
        <taxon>Streptosporangiales</taxon>
        <taxon>Nocardiopsidaceae</taxon>
        <taxon>Thermobifida</taxon>
    </lineage>
</organism>
<dbReference type="EC" id="6.3.5.3" evidence="1"/>
<dbReference type="EMBL" id="CP000088">
    <property type="protein sequence ID" value="AAZ54196.1"/>
    <property type="molecule type" value="Genomic_DNA"/>
</dbReference>
<dbReference type="RefSeq" id="WP_011290605.1">
    <property type="nucleotide sequence ID" value="NC_007333.1"/>
</dbReference>
<dbReference type="SMR" id="Q47TL8"/>
<dbReference type="STRING" id="269800.Tfu_0158"/>
<dbReference type="KEGG" id="tfu:Tfu_0158"/>
<dbReference type="eggNOG" id="COG0046">
    <property type="taxonomic scope" value="Bacteria"/>
</dbReference>
<dbReference type="HOGENOM" id="CLU_003100_0_1_11"/>
<dbReference type="OrthoDB" id="9804441at2"/>
<dbReference type="UniPathway" id="UPA00074">
    <property type="reaction ID" value="UER00128"/>
</dbReference>
<dbReference type="GO" id="GO:0005737">
    <property type="term" value="C:cytoplasm"/>
    <property type="evidence" value="ECO:0007669"/>
    <property type="project" value="UniProtKB-SubCell"/>
</dbReference>
<dbReference type="GO" id="GO:0005524">
    <property type="term" value="F:ATP binding"/>
    <property type="evidence" value="ECO:0007669"/>
    <property type="project" value="UniProtKB-UniRule"/>
</dbReference>
<dbReference type="GO" id="GO:0000287">
    <property type="term" value="F:magnesium ion binding"/>
    <property type="evidence" value="ECO:0007669"/>
    <property type="project" value="UniProtKB-UniRule"/>
</dbReference>
<dbReference type="GO" id="GO:0004642">
    <property type="term" value="F:phosphoribosylformylglycinamidine synthase activity"/>
    <property type="evidence" value="ECO:0007669"/>
    <property type="project" value="UniProtKB-UniRule"/>
</dbReference>
<dbReference type="GO" id="GO:0006189">
    <property type="term" value="P:'de novo' IMP biosynthetic process"/>
    <property type="evidence" value="ECO:0007669"/>
    <property type="project" value="UniProtKB-UniRule"/>
</dbReference>
<dbReference type="CDD" id="cd02203">
    <property type="entry name" value="PurL_repeat1"/>
    <property type="match status" value="1"/>
</dbReference>
<dbReference type="CDD" id="cd02204">
    <property type="entry name" value="PurL_repeat2"/>
    <property type="match status" value="1"/>
</dbReference>
<dbReference type="FunFam" id="3.30.1330.10:FF:000004">
    <property type="entry name" value="Phosphoribosylformylglycinamidine synthase subunit PurL"/>
    <property type="match status" value="1"/>
</dbReference>
<dbReference type="Gene3D" id="3.90.650.10">
    <property type="entry name" value="PurM-like C-terminal domain"/>
    <property type="match status" value="2"/>
</dbReference>
<dbReference type="Gene3D" id="3.30.1330.10">
    <property type="entry name" value="PurM-like, N-terminal domain"/>
    <property type="match status" value="2"/>
</dbReference>
<dbReference type="HAMAP" id="MF_00420">
    <property type="entry name" value="PurL_2"/>
    <property type="match status" value="1"/>
</dbReference>
<dbReference type="InterPro" id="IPR010074">
    <property type="entry name" value="PRibForGlyAmidine_synth_PurL"/>
</dbReference>
<dbReference type="InterPro" id="IPR041609">
    <property type="entry name" value="PurL_linker"/>
</dbReference>
<dbReference type="InterPro" id="IPR010918">
    <property type="entry name" value="PurM-like_C_dom"/>
</dbReference>
<dbReference type="InterPro" id="IPR036676">
    <property type="entry name" value="PurM-like_C_sf"/>
</dbReference>
<dbReference type="InterPro" id="IPR016188">
    <property type="entry name" value="PurM-like_N"/>
</dbReference>
<dbReference type="InterPro" id="IPR036921">
    <property type="entry name" value="PurM-like_N_sf"/>
</dbReference>
<dbReference type="NCBIfam" id="TIGR01736">
    <property type="entry name" value="FGAM_synth_II"/>
    <property type="match status" value="1"/>
</dbReference>
<dbReference type="NCBIfam" id="NF002290">
    <property type="entry name" value="PRK01213.1"/>
    <property type="match status" value="1"/>
</dbReference>
<dbReference type="PANTHER" id="PTHR43555">
    <property type="entry name" value="PHOSPHORIBOSYLFORMYLGLYCINAMIDINE SYNTHASE SUBUNIT PURL"/>
    <property type="match status" value="1"/>
</dbReference>
<dbReference type="PANTHER" id="PTHR43555:SF1">
    <property type="entry name" value="PHOSPHORIBOSYLFORMYLGLYCINAMIDINE SYNTHASE SUBUNIT PURL"/>
    <property type="match status" value="1"/>
</dbReference>
<dbReference type="Pfam" id="PF00586">
    <property type="entry name" value="AIRS"/>
    <property type="match status" value="2"/>
</dbReference>
<dbReference type="Pfam" id="PF02769">
    <property type="entry name" value="AIRS_C"/>
    <property type="match status" value="2"/>
</dbReference>
<dbReference type="Pfam" id="PF18072">
    <property type="entry name" value="FGAR-AT_linker"/>
    <property type="match status" value="1"/>
</dbReference>
<dbReference type="PIRSF" id="PIRSF001587">
    <property type="entry name" value="FGAM_synthase_II"/>
    <property type="match status" value="1"/>
</dbReference>
<dbReference type="SUPFAM" id="SSF56042">
    <property type="entry name" value="PurM C-terminal domain-like"/>
    <property type="match status" value="2"/>
</dbReference>
<dbReference type="SUPFAM" id="SSF55326">
    <property type="entry name" value="PurM N-terminal domain-like"/>
    <property type="match status" value="2"/>
</dbReference>
<proteinExistence type="inferred from homology"/>
<reference key="1">
    <citation type="journal article" date="2007" name="J. Bacteriol.">
        <title>Genome sequence and analysis of the soil cellulolytic actinomycete Thermobifida fusca YX.</title>
        <authorList>
            <person name="Lykidis A."/>
            <person name="Mavromatis K."/>
            <person name="Ivanova N."/>
            <person name="Anderson I."/>
            <person name="Land M."/>
            <person name="DiBartolo G."/>
            <person name="Martinez M."/>
            <person name="Lapidus A."/>
            <person name="Lucas S."/>
            <person name="Copeland A."/>
            <person name="Richardson P."/>
            <person name="Wilson D.B."/>
            <person name="Kyrpides N."/>
        </authorList>
    </citation>
    <scope>NUCLEOTIDE SEQUENCE [LARGE SCALE GENOMIC DNA]</scope>
    <source>
        <strain>YX</strain>
    </source>
</reference>
<keyword id="KW-0067">ATP-binding</keyword>
<keyword id="KW-0963">Cytoplasm</keyword>
<keyword id="KW-0436">Ligase</keyword>
<keyword id="KW-0460">Magnesium</keyword>
<keyword id="KW-0479">Metal-binding</keyword>
<keyword id="KW-0547">Nucleotide-binding</keyword>
<keyword id="KW-0658">Purine biosynthesis</keyword>
<name>PURL_THEFY</name>
<comment type="function">
    <text evidence="1">Part of the phosphoribosylformylglycinamidine synthase complex involved in the purines biosynthetic pathway. Catalyzes the ATP-dependent conversion of formylglycinamide ribonucleotide (FGAR) and glutamine to yield formylglycinamidine ribonucleotide (FGAM) and glutamate. The FGAM synthase complex is composed of three subunits. PurQ produces an ammonia molecule by converting glutamine to glutamate. PurL transfers the ammonia molecule to FGAR to form FGAM in an ATP-dependent manner. PurS interacts with PurQ and PurL and is thought to assist in the transfer of the ammonia molecule from PurQ to PurL.</text>
</comment>
<comment type="catalytic activity">
    <reaction evidence="1">
        <text>N(2)-formyl-N(1)-(5-phospho-beta-D-ribosyl)glycinamide + L-glutamine + ATP + H2O = 2-formamido-N(1)-(5-O-phospho-beta-D-ribosyl)acetamidine + L-glutamate + ADP + phosphate + H(+)</text>
        <dbReference type="Rhea" id="RHEA:17129"/>
        <dbReference type="ChEBI" id="CHEBI:15377"/>
        <dbReference type="ChEBI" id="CHEBI:15378"/>
        <dbReference type="ChEBI" id="CHEBI:29985"/>
        <dbReference type="ChEBI" id="CHEBI:30616"/>
        <dbReference type="ChEBI" id="CHEBI:43474"/>
        <dbReference type="ChEBI" id="CHEBI:58359"/>
        <dbReference type="ChEBI" id="CHEBI:147286"/>
        <dbReference type="ChEBI" id="CHEBI:147287"/>
        <dbReference type="ChEBI" id="CHEBI:456216"/>
        <dbReference type="EC" id="6.3.5.3"/>
    </reaction>
</comment>
<comment type="pathway">
    <text evidence="1">Purine metabolism; IMP biosynthesis via de novo pathway; 5-amino-1-(5-phospho-D-ribosyl)imidazole from N(2)-formyl-N(1)-(5-phospho-D-ribosyl)glycinamide: step 1/2.</text>
</comment>
<comment type="subunit">
    <text evidence="1">Monomer. Part of the FGAM synthase complex composed of 1 PurL, 1 PurQ and 2 PurS subunits.</text>
</comment>
<comment type="subcellular location">
    <subcellularLocation>
        <location evidence="1">Cytoplasm</location>
    </subcellularLocation>
</comment>
<comment type="similarity">
    <text evidence="1">Belongs to the FGAMS family.</text>
</comment>
<protein>
    <recommendedName>
        <fullName evidence="1">Phosphoribosylformylglycinamidine synthase subunit PurL</fullName>
        <shortName evidence="1">FGAM synthase</shortName>
        <ecNumber evidence="1">6.3.5.3</ecNumber>
    </recommendedName>
    <alternativeName>
        <fullName evidence="1">Formylglycinamide ribonucleotide amidotransferase subunit II</fullName>
        <shortName evidence="1">FGAR amidotransferase II</shortName>
        <shortName evidence="1">FGAR-AT II</shortName>
    </alternativeName>
    <alternativeName>
        <fullName evidence="1">Glutamine amidotransferase PurL</fullName>
    </alternativeName>
    <alternativeName>
        <fullName evidence="1">Phosphoribosylformylglycinamidine synthase subunit II</fullName>
    </alternativeName>
</protein>
<gene>
    <name evidence="1" type="primary">purL</name>
    <name type="ordered locus">Tfu_0158</name>
</gene>